<dbReference type="EMBL" id="AB063019">
    <property type="protein sequence ID" value="BAB60766.1"/>
    <property type="molecule type" value="mRNA"/>
</dbReference>
<dbReference type="EMBL" id="AB063065">
    <property type="protein sequence ID" value="BAB60785.1"/>
    <property type="molecule type" value="mRNA"/>
</dbReference>
<dbReference type="EMBL" id="AB060829">
    <property type="protein sequence ID" value="BAB46861.1"/>
    <property type="molecule type" value="mRNA"/>
</dbReference>
<dbReference type="RefSeq" id="NP_001273070.1">
    <property type="nucleotide sequence ID" value="NM_001286141.1"/>
</dbReference>
<dbReference type="RefSeq" id="XP_045240030.1">
    <property type="nucleotide sequence ID" value="XM_045384095.2"/>
</dbReference>
<dbReference type="SMR" id="Q95KB0"/>
<dbReference type="STRING" id="9541.ENSMFAP00000005577"/>
<dbReference type="GeneID" id="102116138"/>
<dbReference type="VEuPathDB" id="HostDB:ENSMFAG00000002447"/>
<dbReference type="eggNOG" id="KOG1017">
    <property type="taxonomic scope" value="Eukaryota"/>
</dbReference>
<dbReference type="OMA" id="NLFCTPM"/>
<dbReference type="Proteomes" id="UP000233100">
    <property type="component" value="Chromosome X"/>
</dbReference>
<dbReference type="GO" id="GO:0005737">
    <property type="term" value="C:cytoplasm"/>
    <property type="evidence" value="ECO:0007669"/>
    <property type="project" value="UniProtKB-SubCell"/>
</dbReference>
<dbReference type="GO" id="GO:0005634">
    <property type="term" value="C:nucleus"/>
    <property type="evidence" value="ECO:0007669"/>
    <property type="project" value="UniProtKB-SubCell"/>
</dbReference>
<dbReference type="GO" id="GO:0005525">
    <property type="term" value="F:GTP binding"/>
    <property type="evidence" value="ECO:0007669"/>
    <property type="project" value="UniProtKB-KW"/>
</dbReference>
<dbReference type="CDD" id="cd06223">
    <property type="entry name" value="PRTases_typeI"/>
    <property type="match status" value="1"/>
</dbReference>
<dbReference type="FunFam" id="3.40.50.2020:FF:000026">
    <property type="entry name" value="Uracil phosphoribosyltransferase homolog"/>
    <property type="match status" value="1"/>
</dbReference>
<dbReference type="Gene3D" id="3.40.50.2020">
    <property type="match status" value="1"/>
</dbReference>
<dbReference type="InterPro" id="IPR000836">
    <property type="entry name" value="PRibTrfase_dom"/>
</dbReference>
<dbReference type="InterPro" id="IPR029057">
    <property type="entry name" value="PRTase-like"/>
</dbReference>
<dbReference type="Pfam" id="PF14681">
    <property type="entry name" value="UPRTase"/>
    <property type="match status" value="1"/>
</dbReference>
<dbReference type="SUPFAM" id="SSF53271">
    <property type="entry name" value="PRTase-like"/>
    <property type="match status" value="1"/>
</dbReference>
<organism>
    <name type="scientific">Macaca fascicularis</name>
    <name type="common">Crab-eating macaque</name>
    <name type="synonym">Cynomolgus monkey</name>
    <dbReference type="NCBI Taxonomy" id="9541"/>
    <lineage>
        <taxon>Eukaryota</taxon>
        <taxon>Metazoa</taxon>
        <taxon>Chordata</taxon>
        <taxon>Craniata</taxon>
        <taxon>Vertebrata</taxon>
        <taxon>Euteleostomi</taxon>
        <taxon>Mammalia</taxon>
        <taxon>Eutheria</taxon>
        <taxon>Euarchontoglires</taxon>
        <taxon>Primates</taxon>
        <taxon>Haplorrhini</taxon>
        <taxon>Catarrhini</taxon>
        <taxon>Cercopithecidae</taxon>
        <taxon>Cercopithecinae</taxon>
        <taxon>Macaca</taxon>
    </lineage>
</organism>
<comment type="subcellular location">
    <subcellularLocation>
        <location evidence="1">Cytoplasm</location>
    </subcellularLocation>
    <subcellularLocation>
        <location evidence="1">Nucleus</location>
    </subcellularLocation>
</comment>
<comment type="similarity">
    <text evidence="5">Belongs to the UPRTase family.</text>
</comment>
<comment type="caution">
    <text evidence="5">The uracil binding region known from UPRTases is missing.</text>
</comment>
<keyword id="KW-0963">Cytoplasm</keyword>
<keyword id="KW-0342">GTP-binding</keyword>
<keyword id="KW-0547">Nucleotide-binding</keyword>
<keyword id="KW-0539">Nucleus</keyword>
<keyword id="KW-0597">Phosphoprotein</keyword>
<keyword id="KW-1185">Reference proteome</keyword>
<evidence type="ECO:0000250" key="1"/>
<evidence type="ECO:0000250" key="2">
    <source>
        <dbReference type="UniProtKB" id="B1AVZ0"/>
    </source>
</evidence>
<evidence type="ECO:0000250" key="3">
    <source>
        <dbReference type="UniProtKB" id="Q26998"/>
    </source>
</evidence>
<evidence type="ECO:0000256" key="4">
    <source>
        <dbReference type="SAM" id="MobiDB-lite"/>
    </source>
</evidence>
<evidence type="ECO:0000305" key="5"/>
<feature type="chain" id="PRO_0000254536" description="Uracil phosphoribosyltransferase homolog">
    <location>
        <begin position="1"/>
        <end position="309"/>
    </location>
</feature>
<feature type="region of interest" description="Disordered" evidence="4">
    <location>
        <begin position="1"/>
        <end position="41"/>
    </location>
</feature>
<feature type="compositionally biased region" description="Polar residues" evidence="4">
    <location>
        <begin position="13"/>
        <end position="26"/>
    </location>
</feature>
<feature type="binding site" evidence="3">
    <location>
        <position position="133"/>
    </location>
    <ligand>
        <name>GTP</name>
        <dbReference type="ChEBI" id="CHEBI:37565"/>
    </ligand>
</feature>
<feature type="binding site" evidence="3">
    <location>
        <position position="142"/>
    </location>
    <ligand>
        <name>GTP</name>
        <dbReference type="ChEBI" id="CHEBI:37565"/>
    </ligand>
</feature>
<feature type="binding site" evidence="3">
    <location>
        <begin position="176"/>
        <end position="179"/>
    </location>
    <ligand>
        <name>GTP</name>
        <dbReference type="ChEBI" id="CHEBI:37565"/>
    </ligand>
</feature>
<feature type="binding site" evidence="3">
    <location>
        <position position="186"/>
    </location>
    <ligand>
        <name>5-phospho-alpha-D-ribose 1-diphosphate</name>
        <dbReference type="ChEBI" id="CHEBI:58017"/>
    </ligand>
</feature>
<feature type="binding site" evidence="3">
    <location>
        <position position="203"/>
    </location>
    <ligand>
        <name>GTP</name>
        <dbReference type="ChEBI" id="CHEBI:37565"/>
    </ligand>
</feature>
<feature type="binding site" evidence="3">
    <location>
        <position position="232"/>
    </location>
    <ligand>
        <name>GTP</name>
        <dbReference type="ChEBI" id="CHEBI:37565"/>
    </ligand>
</feature>
<feature type="binding site" evidence="3">
    <location>
        <begin position="238"/>
        <end position="246"/>
    </location>
    <ligand>
        <name>5-phospho-alpha-D-ribose 1-diphosphate</name>
        <dbReference type="ChEBI" id="CHEBI:58017"/>
    </ligand>
</feature>
<feature type="binding site" evidence="3">
    <location>
        <begin position="299"/>
        <end position="301"/>
    </location>
    <ligand>
        <name>uracil</name>
        <dbReference type="ChEBI" id="CHEBI:17568"/>
    </ligand>
</feature>
<feature type="modified residue" description="Phosphoserine" evidence="2">
    <location>
        <position position="25"/>
    </location>
</feature>
<feature type="sequence conflict" description="In Ref. 2; BAB60785." evidence="5" ref="2">
    <original>E</original>
    <variation>K</variation>
    <location>
        <position position="101"/>
    </location>
</feature>
<feature type="sequence conflict" description="In Ref. 2; BAB60785." evidence="5" ref="2">
    <original>A</original>
    <variation>V</variation>
    <location>
        <position position="108"/>
    </location>
</feature>
<feature type="sequence conflict" description="In Ref. 2; BAB46861." evidence="5" ref="2">
    <original>I</original>
    <variation>V</variation>
    <location>
        <position position="125"/>
    </location>
</feature>
<sequence length="309" mass="33762">MATELQCPDSMPCHNQQVNSASTPSPEQLRPGDPILDHAGGNRASRAKVTLLTGHTHCSLPAELDAGACVGSSLNSESNSGSGDSSSYDAPAGNSFLGDCELSRQIGAQLKLLPMNDQIRELQTIIRDKTASRGDFMFSADRLIRLVVEEGLNQLPYKECMVTTPTGYKYEGVKFEKGNCGVSIMRSGEAMEQGLRDCCRSIRIGKILIQSDEETQRAKVYYAKFPPDIYRRKVLLMYPILSTGNTVIEAVKVLIEHGVQPSVIILLSLFSTPHGAKSIIQEFPEITILTTEVHPVAPTHFGQKYFGTD</sequence>
<gene>
    <name type="primary">UPRT</name>
    <name type="ORF">QmoA-12555</name>
    <name type="ORF">QtrA-10339</name>
</gene>
<accession>Q95KB0</accession>
<accession>Q95K91</accession>
<accession>Q95KJ5</accession>
<reference key="1">
    <citation type="journal article" date="2002" name="Genome Biol.">
        <title>Prediction of unidentified human genes on the basis of sequence similarity to novel cDNAs from cynomolgus monkey brain.</title>
        <authorList>
            <person name="Osada N."/>
            <person name="Hida M."/>
            <person name="Kusuda J."/>
            <person name="Tanuma R."/>
            <person name="Hirata M."/>
            <person name="Hirai M."/>
            <person name="Terao K."/>
            <person name="Suzuki Y."/>
            <person name="Sugano S."/>
            <person name="Hashimoto K."/>
        </authorList>
    </citation>
    <scope>NUCLEOTIDE SEQUENCE [LARGE SCALE MRNA]</scope>
    <source>
        <tissue>Temporal cortex</tissue>
    </source>
</reference>
<reference key="2">
    <citation type="submission" date="2001-06" db="EMBL/GenBank/DDBJ databases">
        <title>Isolation of full-length cDNA clones from macaque brain cDNA libraries.</title>
        <authorList>
            <person name="Osada N."/>
            <person name="Hida M."/>
            <person name="Kusuda J."/>
            <person name="Tanuma R."/>
            <person name="Iseki K."/>
            <person name="Hirai M."/>
            <person name="Terao K."/>
            <person name="Suzuki Y."/>
            <person name="Sugano S."/>
            <person name="Hashimoto K."/>
        </authorList>
    </citation>
    <scope>NUCLEOTIDE SEQUENCE [LARGE SCALE MRNA]</scope>
    <source>
        <tissue>Medulla oblongata</tissue>
    </source>
</reference>
<name>UPP_MACFA</name>
<proteinExistence type="evidence at transcript level"/>
<protein>
    <recommendedName>
        <fullName>Uracil phosphoribosyltransferase homolog</fullName>
    </recommendedName>
</protein>